<sequence length="179" mass="20302">MAKLHDYYKDEVVKKLMTEFNYNSVMQVPRVEKITLNMGVGEAIADKKLLDNAAADLAAISGQKPLITKARKSVAGFKIRQGYPIGCKVTLRGERMWEFFERLITIAVPRIRDFRGLSAKSFDGRGNYSMGVREQIIFPEIDYDKVDRVRGLDITITTTAKSDEEGRALLAAFDFPFRK</sequence>
<name>RL5_ECO8A</name>
<dbReference type="EMBL" id="CU928160">
    <property type="protein sequence ID" value="CAR00259.1"/>
    <property type="molecule type" value="Genomic_DNA"/>
</dbReference>
<dbReference type="RefSeq" id="WP_001096200.1">
    <property type="nucleotide sequence ID" value="NC_011741.1"/>
</dbReference>
<dbReference type="SMR" id="B7M1M2"/>
<dbReference type="GeneID" id="93778679"/>
<dbReference type="KEGG" id="ecr:ECIAI1_3457"/>
<dbReference type="HOGENOM" id="CLU_061015_2_1_6"/>
<dbReference type="GO" id="GO:1990904">
    <property type="term" value="C:ribonucleoprotein complex"/>
    <property type="evidence" value="ECO:0007669"/>
    <property type="project" value="UniProtKB-KW"/>
</dbReference>
<dbReference type="GO" id="GO:0005840">
    <property type="term" value="C:ribosome"/>
    <property type="evidence" value="ECO:0007669"/>
    <property type="project" value="UniProtKB-KW"/>
</dbReference>
<dbReference type="GO" id="GO:0019843">
    <property type="term" value="F:rRNA binding"/>
    <property type="evidence" value="ECO:0007669"/>
    <property type="project" value="UniProtKB-UniRule"/>
</dbReference>
<dbReference type="GO" id="GO:0003735">
    <property type="term" value="F:structural constituent of ribosome"/>
    <property type="evidence" value="ECO:0007669"/>
    <property type="project" value="InterPro"/>
</dbReference>
<dbReference type="GO" id="GO:0000049">
    <property type="term" value="F:tRNA binding"/>
    <property type="evidence" value="ECO:0007669"/>
    <property type="project" value="UniProtKB-UniRule"/>
</dbReference>
<dbReference type="GO" id="GO:0006412">
    <property type="term" value="P:translation"/>
    <property type="evidence" value="ECO:0007669"/>
    <property type="project" value="UniProtKB-UniRule"/>
</dbReference>
<dbReference type="FunFam" id="3.30.1440.10:FF:000001">
    <property type="entry name" value="50S ribosomal protein L5"/>
    <property type="match status" value="1"/>
</dbReference>
<dbReference type="Gene3D" id="3.30.1440.10">
    <property type="match status" value="1"/>
</dbReference>
<dbReference type="HAMAP" id="MF_01333_B">
    <property type="entry name" value="Ribosomal_uL5_B"/>
    <property type="match status" value="1"/>
</dbReference>
<dbReference type="InterPro" id="IPR002132">
    <property type="entry name" value="Ribosomal_uL5"/>
</dbReference>
<dbReference type="InterPro" id="IPR020930">
    <property type="entry name" value="Ribosomal_uL5_bac-type"/>
</dbReference>
<dbReference type="InterPro" id="IPR031309">
    <property type="entry name" value="Ribosomal_uL5_C"/>
</dbReference>
<dbReference type="InterPro" id="IPR020929">
    <property type="entry name" value="Ribosomal_uL5_CS"/>
</dbReference>
<dbReference type="InterPro" id="IPR022803">
    <property type="entry name" value="Ribosomal_uL5_dom_sf"/>
</dbReference>
<dbReference type="InterPro" id="IPR031310">
    <property type="entry name" value="Ribosomal_uL5_N"/>
</dbReference>
<dbReference type="NCBIfam" id="NF000585">
    <property type="entry name" value="PRK00010.1"/>
    <property type="match status" value="1"/>
</dbReference>
<dbReference type="PANTHER" id="PTHR11994">
    <property type="entry name" value="60S RIBOSOMAL PROTEIN L11-RELATED"/>
    <property type="match status" value="1"/>
</dbReference>
<dbReference type="Pfam" id="PF00281">
    <property type="entry name" value="Ribosomal_L5"/>
    <property type="match status" value="1"/>
</dbReference>
<dbReference type="Pfam" id="PF00673">
    <property type="entry name" value="Ribosomal_L5_C"/>
    <property type="match status" value="1"/>
</dbReference>
<dbReference type="PIRSF" id="PIRSF002161">
    <property type="entry name" value="Ribosomal_L5"/>
    <property type="match status" value="1"/>
</dbReference>
<dbReference type="SUPFAM" id="SSF55282">
    <property type="entry name" value="RL5-like"/>
    <property type="match status" value="1"/>
</dbReference>
<dbReference type="PROSITE" id="PS00358">
    <property type="entry name" value="RIBOSOMAL_L5"/>
    <property type="match status" value="1"/>
</dbReference>
<accession>B7M1M2</accession>
<evidence type="ECO:0000255" key="1">
    <source>
        <dbReference type="HAMAP-Rule" id="MF_01333"/>
    </source>
</evidence>
<evidence type="ECO:0000305" key="2"/>
<proteinExistence type="inferred from homology"/>
<feature type="chain" id="PRO_1000142396" description="Large ribosomal subunit protein uL5">
    <location>
        <begin position="1"/>
        <end position="179"/>
    </location>
</feature>
<feature type="modified residue" description="N6-acetyllysine" evidence="1">
    <location>
        <position position="3"/>
    </location>
</feature>
<comment type="function">
    <text evidence="1">This is one of the proteins that bind and probably mediate the attachment of the 5S RNA into the large ribosomal subunit, where it forms part of the central protuberance. In the 70S ribosome it contacts protein S13 of the 30S subunit (bridge B1b), connecting the 2 subunits; this bridge is implicated in subunit movement. Contacts the P site tRNA; the 5S rRNA and some of its associated proteins might help stabilize positioning of ribosome-bound tRNAs.</text>
</comment>
<comment type="subunit">
    <text evidence="1">Part of the 50S ribosomal subunit; part of the 5S rRNA/L5/L18/L25 subcomplex. Contacts the 5S rRNA and the P site tRNA. Forms a bridge to the 30S subunit in the 70S ribosome.</text>
</comment>
<comment type="similarity">
    <text evidence="1">Belongs to the universal ribosomal protein uL5 family.</text>
</comment>
<reference key="1">
    <citation type="journal article" date="2009" name="PLoS Genet.">
        <title>Organised genome dynamics in the Escherichia coli species results in highly diverse adaptive paths.</title>
        <authorList>
            <person name="Touchon M."/>
            <person name="Hoede C."/>
            <person name="Tenaillon O."/>
            <person name="Barbe V."/>
            <person name="Baeriswyl S."/>
            <person name="Bidet P."/>
            <person name="Bingen E."/>
            <person name="Bonacorsi S."/>
            <person name="Bouchier C."/>
            <person name="Bouvet O."/>
            <person name="Calteau A."/>
            <person name="Chiapello H."/>
            <person name="Clermont O."/>
            <person name="Cruveiller S."/>
            <person name="Danchin A."/>
            <person name="Diard M."/>
            <person name="Dossat C."/>
            <person name="Karoui M.E."/>
            <person name="Frapy E."/>
            <person name="Garry L."/>
            <person name="Ghigo J.M."/>
            <person name="Gilles A.M."/>
            <person name="Johnson J."/>
            <person name="Le Bouguenec C."/>
            <person name="Lescat M."/>
            <person name="Mangenot S."/>
            <person name="Martinez-Jehanne V."/>
            <person name="Matic I."/>
            <person name="Nassif X."/>
            <person name="Oztas S."/>
            <person name="Petit M.A."/>
            <person name="Pichon C."/>
            <person name="Rouy Z."/>
            <person name="Ruf C.S."/>
            <person name="Schneider D."/>
            <person name="Tourret J."/>
            <person name="Vacherie B."/>
            <person name="Vallenet D."/>
            <person name="Medigue C."/>
            <person name="Rocha E.P.C."/>
            <person name="Denamur E."/>
        </authorList>
    </citation>
    <scope>NUCLEOTIDE SEQUENCE [LARGE SCALE GENOMIC DNA]</scope>
    <source>
        <strain>IAI1</strain>
    </source>
</reference>
<keyword id="KW-0007">Acetylation</keyword>
<keyword id="KW-0687">Ribonucleoprotein</keyword>
<keyword id="KW-0689">Ribosomal protein</keyword>
<keyword id="KW-0694">RNA-binding</keyword>
<keyword id="KW-0699">rRNA-binding</keyword>
<keyword id="KW-0820">tRNA-binding</keyword>
<organism>
    <name type="scientific">Escherichia coli O8 (strain IAI1)</name>
    <dbReference type="NCBI Taxonomy" id="585034"/>
    <lineage>
        <taxon>Bacteria</taxon>
        <taxon>Pseudomonadati</taxon>
        <taxon>Pseudomonadota</taxon>
        <taxon>Gammaproteobacteria</taxon>
        <taxon>Enterobacterales</taxon>
        <taxon>Enterobacteriaceae</taxon>
        <taxon>Escherichia</taxon>
    </lineage>
</organism>
<protein>
    <recommendedName>
        <fullName evidence="1">Large ribosomal subunit protein uL5</fullName>
    </recommendedName>
    <alternativeName>
        <fullName evidence="2">50S ribosomal protein L5</fullName>
    </alternativeName>
</protein>
<gene>
    <name evidence="1" type="primary">rplE</name>
    <name type="ordered locus">ECIAI1_3457</name>
</gene>